<keyword id="KW-0472">Membrane</keyword>
<keyword id="KW-0602">Photosynthesis</keyword>
<keyword id="KW-0604">Photosystem II</keyword>
<keyword id="KW-0674">Reaction center</keyword>
<keyword id="KW-0793">Thylakoid</keyword>
<keyword id="KW-0812">Transmembrane</keyword>
<keyword id="KW-1133">Transmembrane helix</keyword>
<proteinExistence type="inferred from homology"/>
<dbReference type="EMBL" id="BX548174">
    <property type="protein sequence ID" value="CAE18758.1"/>
    <property type="molecule type" value="Genomic_DNA"/>
</dbReference>
<dbReference type="RefSeq" id="WP_011131936.1">
    <property type="nucleotide sequence ID" value="NC_005072.1"/>
</dbReference>
<dbReference type="SMR" id="Q7V2Z8"/>
<dbReference type="STRING" id="59919.PMM0299"/>
<dbReference type="KEGG" id="pmm:PMM0299"/>
<dbReference type="HOGENOM" id="CLU_214425_0_0_3"/>
<dbReference type="Proteomes" id="UP000001026">
    <property type="component" value="Chromosome"/>
</dbReference>
<dbReference type="GO" id="GO:0009539">
    <property type="term" value="C:photosystem II reaction center"/>
    <property type="evidence" value="ECO:0007669"/>
    <property type="project" value="InterPro"/>
</dbReference>
<dbReference type="GO" id="GO:0031676">
    <property type="term" value="C:plasma membrane-derived thylakoid membrane"/>
    <property type="evidence" value="ECO:0007669"/>
    <property type="project" value="UniProtKB-SubCell"/>
</dbReference>
<dbReference type="GO" id="GO:0015979">
    <property type="term" value="P:photosynthesis"/>
    <property type="evidence" value="ECO:0007669"/>
    <property type="project" value="UniProtKB-UniRule"/>
</dbReference>
<dbReference type="HAMAP" id="MF_01317">
    <property type="entry name" value="PSII_PsbL"/>
    <property type="match status" value="1"/>
</dbReference>
<dbReference type="InterPro" id="IPR003372">
    <property type="entry name" value="PSII_PsbL"/>
</dbReference>
<dbReference type="InterPro" id="IPR037266">
    <property type="entry name" value="PSII_PsbL_sf"/>
</dbReference>
<dbReference type="NCBIfam" id="NF001972">
    <property type="entry name" value="PRK00753.1"/>
    <property type="match status" value="1"/>
</dbReference>
<dbReference type="Pfam" id="PF02419">
    <property type="entry name" value="PsbL"/>
    <property type="match status" value="1"/>
</dbReference>
<dbReference type="SUPFAM" id="SSF161017">
    <property type="entry name" value="Photosystem II reaction center protein L, PsbL"/>
    <property type="match status" value="1"/>
</dbReference>
<protein>
    <recommendedName>
        <fullName evidence="1">Photosystem II reaction center protein L</fullName>
        <shortName evidence="1">PSII-L</shortName>
    </recommendedName>
</protein>
<feature type="chain" id="PRO_0000219789" description="Photosystem II reaction center protein L">
    <location>
        <begin position="1"/>
        <end position="39"/>
    </location>
</feature>
<feature type="transmembrane region" description="Helical" evidence="1">
    <location>
        <begin position="18"/>
        <end position="38"/>
    </location>
</feature>
<evidence type="ECO:0000255" key="1">
    <source>
        <dbReference type="HAMAP-Rule" id="MF_01317"/>
    </source>
</evidence>
<evidence type="ECO:0000305" key="2"/>
<organism>
    <name type="scientific">Prochlorococcus marinus subsp. pastoris (strain CCMP1986 / NIES-2087 / MED4)</name>
    <dbReference type="NCBI Taxonomy" id="59919"/>
    <lineage>
        <taxon>Bacteria</taxon>
        <taxon>Bacillati</taxon>
        <taxon>Cyanobacteriota</taxon>
        <taxon>Cyanophyceae</taxon>
        <taxon>Synechococcales</taxon>
        <taxon>Prochlorococcaceae</taxon>
        <taxon>Prochlorococcus</taxon>
    </lineage>
</organism>
<accession>Q7V2Z8</accession>
<comment type="function">
    <text evidence="1">One of the components of the core complex of photosystem II (PSII). PSII is a light-driven water:plastoquinone oxidoreductase that uses light energy to abstract electrons from H(2)O, generating O(2) and a proton gradient subsequently used for ATP formation. It consists of a core antenna complex that captures photons, and an electron transfer chain that converts photonic excitation into a charge separation. This subunit is found at the monomer-monomer interface and is required for correct PSII assembly and/or dimerization.</text>
</comment>
<comment type="subunit">
    <text evidence="2">PSII is composed of 1 copy each of membrane proteins PsbA, PsbB, PsbC, PsbD, PsbE, PsbF, PsbH, PsbI, PsbJ, PsbK, PsbL, PsbM, PsbT, PsbX, PsbY, Psb30/Ycf12, peripheral proteins PsbO, CyanoQ (PsbQ), PsbU, PsbV and a large number of cofactors. It forms dimeric complexes.</text>
</comment>
<comment type="subcellular location">
    <subcellularLocation>
        <location evidence="1">Cellular thylakoid membrane</location>
        <topology evidence="1">Single-pass membrane protein</topology>
    </subcellularLocation>
</comment>
<comment type="similarity">
    <text evidence="1">Belongs to the PsbL family.</text>
</comment>
<gene>
    <name evidence="1" type="primary">psbL</name>
    <name type="ordered locus">PMM0299</name>
</gene>
<sequence>MQVNENPNKVPVELNRTSLYLGLLSVLVLGILFSSYFFN</sequence>
<name>PSBL_PROMP</name>
<reference key="1">
    <citation type="journal article" date="2003" name="Nature">
        <title>Genome divergence in two Prochlorococcus ecotypes reflects oceanic niche differentiation.</title>
        <authorList>
            <person name="Rocap G."/>
            <person name="Larimer F.W."/>
            <person name="Lamerdin J.E."/>
            <person name="Malfatti S."/>
            <person name="Chain P."/>
            <person name="Ahlgren N.A."/>
            <person name="Arellano A."/>
            <person name="Coleman M."/>
            <person name="Hauser L."/>
            <person name="Hess W.R."/>
            <person name="Johnson Z.I."/>
            <person name="Land M.L."/>
            <person name="Lindell D."/>
            <person name="Post A.F."/>
            <person name="Regala W."/>
            <person name="Shah M."/>
            <person name="Shaw S.L."/>
            <person name="Steglich C."/>
            <person name="Sullivan M.B."/>
            <person name="Ting C.S."/>
            <person name="Tolonen A."/>
            <person name="Webb E.A."/>
            <person name="Zinser E.R."/>
            <person name="Chisholm S.W."/>
        </authorList>
    </citation>
    <scope>NUCLEOTIDE SEQUENCE [LARGE SCALE GENOMIC DNA]</scope>
    <source>
        <strain>CCMP1986 / NIES-2087 / MED4</strain>
    </source>
</reference>